<dbReference type="EC" id="3.1.26.4" evidence="1"/>
<dbReference type="EMBL" id="CP000469">
    <property type="protein sequence ID" value="ABK48595.1"/>
    <property type="molecule type" value="Genomic_DNA"/>
</dbReference>
<dbReference type="RefSeq" id="WP_011717297.1">
    <property type="nucleotide sequence ID" value="NC_008577.1"/>
</dbReference>
<dbReference type="SMR" id="A0KXS6"/>
<dbReference type="STRING" id="94122.Shewana3_2366"/>
<dbReference type="KEGG" id="shn:Shewana3_2366"/>
<dbReference type="eggNOG" id="COG0328">
    <property type="taxonomic scope" value="Bacteria"/>
</dbReference>
<dbReference type="HOGENOM" id="CLU_030894_6_0_6"/>
<dbReference type="OrthoDB" id="7845843at2"/>
<dbReference type="Proteomes" id="UP000002589">
    <property type="component" value="Chromosome"/>
</dbReference>
<dbReference type="GO" id="GO:0005737">
    <property type="term" value="C:cytoplasm"/>
    <property type="evidence" value="ECO:0007669"/>
    <property type="project" value="UniProtKB-SubCell"/>
</dbReference>
<dbReference type="GO" id="GO:0000287">
    <property type="term" value="F:magnesium ion binding"/>
    <property type="evidence" value="ECO:0007669"/>
    <property type="project" value="UniProtKB-UniRule"/>
</dbReference>
<dbReference type="GO" id="GO:0003676">
    <property type="term" value="F:nucleic acid binding"/>
    <property type="evidence" value="ECO:0007669"/>
    <property type="project" value="InterPro"/>
</dbReference>
<dbReference type="GO" id="GO:0004523">
    <property type="term" value="F:RNA-DNA hybrid ribonuclease activity"/>
    <property type="evidence" value="ECO:0007669"/>
    <property type="project" value="UniProtKB-UniRule"/>
</dbReference>
<dbReference type="GO" id="GO:0043137">
    <property type="term" value="P:DNA replication, removal of RNA primer"/>
    <property type="evidence" value="ECO:0007669"/>
    <property type="project" value="TreeGrafter"/>
</dbReference>
<dbReference type="CDD" id="cd09278">
    <property type="entry name" value="RNase_HI_prokaryote_like"/>
    <property type="match status" value="1"/>
</dbReference>
<dbReference type="FunFam" id="3.30.420.10:FF:000008">
    <property type="entry name" value="Ribonuclease H"/>
    <property type="match status" value="1"/>
</dbReference>
<dbReference type="Gene3D" id="3.30.420.10">
    <property type="entry name" value="Ribonuclease H-like superfamily/Ribonuclease H"/>
    <property type="match status" value="1"/>
</dbReference>
<dbReference type="HAMAP" id="MF_00042">
    <property type="entry name" value="RNase_H"/>
    <property type="match status" value="1"/>
</dbReference>
<dbReference type="InterPro" id="IPR050092">
    <property type="entry name" value="RNase_H"/>
</dbReference>
<dbReference type="InterPro" id="IPR012337">
    <property type="entry name" value="RNaseH-like_sf"/>
</dbReference>
<dbReference type="InterPro" id="IPR002156">
    <property type="entry name" value="RNaseH_domain"/>
</dbReference>
<dbReference type="InterPro" id="IPR036397">
    <property type="entry name" value="RNaseH_sf"/>
</dbReference>
<dbReference type="InterPro" id="IPR022892">
    <property type="entry name" value="RNaseHI"/>
</dbReference>
<dbReference type="NCBIfam" id="NF001236">
    <property type="entry name" value="PRK00203.1"/>
    <property type="match status" value="1"/>
</dbReference>
<dbReference type="PANTHER" id="PTHR10642">
    <property type="entry name" value="RIBONUCLEASE H1"/>
    <property type="match status" value="1"/>
</dbReference>
<dbReference type="PANTHER" id="PTHR10642:SF26">
    <property type="entry name" value="RIBONUCLEASE H1"/>
    <property type="match status" value="1"/>
</dbReference>
<dbReference type="Pfam" id="PF00075">
    <property type="entry name" value="RNase_H"/>
    <property type="match status" value="1"/>
</dbReference>
<dbReference type="SUPFAM" id="SSF53098">
    <property type="entry name" value="Ribonuclease H-like"/>
    <property type="match status" value="1"/>
</dbReference>
<dbReference type="PROSITE" id="PS50879">
    <property type="entry name" value="RNASE_H_1"/>
    <property type="match status" value="1"/>
</dbReference>
<sequence>MTELKLIHIFTDGSCLGNPGPGGYGIVMNYKGHTKEMSDGFALTTNNRMELLAPIVALEALKEPCKVILTSDSQYMRQGITTWIHGWKKKGWMTSNRTPVKNVDLWKRLDKAAQLHQIDWRWVKGHAGHPENERCDQLARAAAEASPTQVDEGYQPES</sequence>
<accession>A0KXS6</accession>
<evidence type="ECO:0000255" key="1">
    <source>
        <dbReference type="HAMAP-Rule" id="MF_00042"/>
    </source>
</evidence>
<evidence type="ECO:0000255" key="2">
    <source>
        <dbReference type="PROSITE-ProRule" id="PRU00408"/>
    </source>
</evidence>
<evidence type="ECO:0000256" key="3">
    <source>
        <dbReference type="SAM" id="MobiDB-lite"/>
    </source>
</evidence>
<reference key="1">
    <citation type="submission" date="2006-09" db="EMBL/GenBank/DDBJ databases">
        <title>Complete sequence of chromosome 1 of Shewanella sp. ANA-3.</title>
        <authorList>
            <person name="Copeland A."/>
            <person name="Lucas S."/>
            <person name="Lapidus A."/>
            <person name="Barry K."/>
            <person name="Detter J.C."/>
            <person name="Glavina del Rio T."/>
            <person name="Hammon N."/>
            <person name="Israni S."/>
            <person name="Dalin E."/>
            <person name="Tice H."/>
            <person name="Pitluck S."/>
            <person name="Chertkov O."/>
            <person name="Brettin T."/>
            <person name="Bruce D."/>
            <person name="Han C."/>
            <person name="Tapia R."/>
            <person name="Gilna P."/>
            <person name="Schmutz J."/>
            <person name="Larimer F."/>
            <person name="Land M."/>
            <person name="Hauser L."/>
            <person name="Kyrpides N."/>
            <person name="Kim E."/>
            <person name="Newman D."/>
            <person name="Salticov C."/>
            <person name="Konstantinidis K."/>
            <person name="Klappenback J."/>
            <person name="Tiedje J."/>
            <person name="Richardson P."/>
        </authorList>
    </citation>
    <scope>NUCLEOTIDE SEQUENCE [LARGE SCALE GENOMIC DNA]</scope>
    <source>
        <strain>ANA-3</strain>
    </source>
</reference>
<gene>
    <name evidence="1" type="primary">rnhA</name>
    <name type="ordered locus">Shewana3_2366</name>
</gene>
<name>RNH_SHESA</name>
<proteinExistence type="inferred from homology"/>
<comment type="function">
    <text evidence="1">Endonuclease that specifically degrades the RNA of RNA-DNA hybrids.</text>
</comment>
<comment type="catalytic activity">
    <reaction evidence="1">
        <text>Endonucleolytic cleavage to 5'-phosphomonoester.</text>
        <dbReference type="EC" id="3.1.26.4"/>
    </reaction>
</comment>
<comment type="cofactor">
    <cofactor evidence="1">
        <name>Mg(2+)</name>
        <dbReference type="ChEBI" id="CHEBI:18420"/>
    </cofactor>
    <text evidence="1">Binds 1 Mg(2+) ion per subunit. May bind a second metal ion at a regulatory site, or after substrate binding.</text>
</comment>
<comment type="subunit">
    <text evidence="1">Monomer.</text>
</comment>
<comment type="subcellular location">
    <subcellularLocation>
        <location evidence="1">Cytoplasm</location>
    </subcellularLocation>
</comment>
<comment type="similarity">
    <text evidence="1">Belongs to the RNase H family.</text>
</comment>
<protein>
    <recommendedName>
        <fullName evidence="1">Ribonuclease H</fullName>
        <shortName evidence="1">RNase H</shortName>
        <ecNumber evidence="1">3.1.26.4</ecNumber>
    </recommendedName>
</protein>
<keyword id="KW-0963">Cytoplasm</keyword>
<keyword id="KW-0255">Endonuclease</keyword>
<keyword id="KW-0378">Hydrolase</keyword>
<keyword id="KW-0460">Magnesium</keyword>
<keyword id="KW-0479">Metal-binding</keyword>
<keyword id="KW-0540">Nuclease</keyword>
<feature type="chain" id="PRO_1000074672" description="Ribonuclease H">
    <location>
        <begin position="1"/>
        <end position="158"/>
    </location>
</feature>
<feature type="domain" description="RNase H type-1" evidence="2">
    <location>
        <begin position="3"/>
        <end position="144"/>
    </location>
</feature>
<feature type="region of interest" description="Disordered" evidence="3">
    <location>
        <begin position="137"/>
        <end position="158"/>
    </location>
</feature>
<feature type="binding site" evidence="1">
    <location>
        <position position="12"/>
    </location>
    <ligand>
        <name>Mg(2+)</name>
        <dbReference type="ChEBI" id="CHEBI:18420"/>
        <label>1</label>
    </ligand>
</feature>
<feature type="binding site" evidence="1">
    <location>
        <position position="12"/>
    </location>
    <ligand>
        <name>Mg(2+)</name>
        <dbReference type="ChEBI" id="CHEBI:18420"/>
        <label>2</label>
    </ligand>
</feature>
<feature type="binding site" evidence="1">
    <location>
        <position position="50"/>
    </location>
    <ligand>
        <name>Mg(2+)</name>
        <dbReference type="ChEBI" id="CHEBI:18420"/>
        <label>1</label>
    </ligand>
</feature>
<feature type="binding site" evidence="1">
    <location>
        <position position="72"/>
    </location>
    <ligand>
        <name>Mg(2+)</name>
        <dbReference type="ChEBI" id="CHEBI:18420"/>
        <label>1</label>
    </ligand>
</feature>
<feature type="binding site" evidence="1">
    <location>
        <position position="136"/>
    </location>
    <ligand>
        <name>Mg(2+)</name>
        <dbReference type="ChEBI" id="CHEBI:18420"/>
        <label>2</label>
    </ligand>
</feature>
<organism>
    <name type="scientific">Shewanella sp. (strain ANA-3)</name>
    <dbReference type="NCBI Taxonomy" id="94122"/>
    <lineage>
        <taxon>Bacteria</taxon>
        <taxon>Pseudomonadati</taxon>
        <taxon>Pseudomonadota</taxon>
        <taxon>Gammaproteobacteria</taxon>
        <taxon>Alteromonadales</taxon>
        <taxon>Shewanellaceae</taxon>
        <taxon>Shewanella</taxon>
    </lineage>
</organism>